<proteinExistence type="evidence at protein level"/>
<evidence type="ECO:0000255" key="1"/>
<evidence type="ECO:0000269" key="2">
    <source>
    </source>
</evidence>
<evidence type="ECO:0000269" key="3">
    <source>
    </source>
</evidence>
<evidence type="ECO:0000269" key="4">
    <source>
    </source>
</evidence>
<evidence type="ECO:0000305" key="5"/>
<comment type="function">
    <text evidence="2 3 4">Involved in cell adhesion. Thought to play an important role in cytokinesis B, probably by providing substrate adhesion and traction forces. Required to organize and polarize the tip epithelium during cytokinesis. Required for the normal distribution of myosin in the tip epithelium. Involved in the localization of ctxA, ctxB, dcsA, exoc6 and rgaA. Thought to form a complex with ctxA, ctxB, and rgaA which regulates myosin accumulation to the apical plasma membrane.</text>
</comment>
<comment type="subunit">
    <text evidence="3 4">Monomer. Associates with F-actin. Interacts with aarA, ctxA, ctxB and rgaA.</text>
</comment>
<comment type="subcellular location">
    <subcellularLocation>
        <location evidence="2">Cytoplasm</location>
        <location evidence="2">Cell cortex</location>
    </subcellularLocation>
    <subcellularLocation>
        <location evidence="3">Cell junction</location>
    </subcellularLocation>
    <text evidence="2 3">Localized during interphase over the cell basal surface with levels decreasing at the basal surface when cells enter the mitotic phase. At this time, there is intense localization along the polar edges (PubMed:19065153). Also found at cell-cell contacts in the slug and fruiting body and in columnar cells of the tip epithelium (PubMed:21393547).</text>
</comment>
<comment type="tissue specificity">
    <text evidence="3">Epithelium.</text>
</comment>
<comment type="developmental stage">
    <text evidence="2">Expressed throughout lifespan; expressed at low levels in single cells but increased during multicellular development, peaking at 10 h.</text>
</comment>
<comment type="disruption phenotype">
    <text evidence="2 3">Cytokinetic defects when knocked out with mhcA. Aberrant epithelial organization and localization of exoc6. Mis-localization of myosin in the tip epithelium causing actomyosin ring malformation in stalk, which appears significantly wider. Distribution of Golgi and centrosomes not polarized. Abnormal intracellular distribution of dcsA.</text>
</comment>
<comment type="similarity">
    <text evidence="5">Belongs to the vinculin/alpha-catenin family.</text>
</comment>
<sequence>MDEVLEMIADAVSSLVVAITDSEEKNTLFGDMVPGVELIQQAVNGMAEAAEETVSLIDEEFIGQLESTSKQLKNSAGQLYVHAVRAREDPWNRVPQKDAIKAAKQILQNVVLLVLIEEQSNIKVLVNIAKKAAEGVRRIDEIENIKQLDVMIGDVNQLQNELVKRSQRRSEGSHNPELRSKLEDIATMVNILSEQHQASARDVCRNPREETLRSKRSELSSKLLSAIDDLIYTIKLIFENNTKFVDLAFKWKPVRTMAEDEVTRASAVLIDNLRTLPKSIEAGNGPAAAREIVNAANLQISNAIIVANRCQDPVKKKMLLKQIEELKKLTPMLISAMKPVLENPNDQEAQKHLESVIYSTQKASEALATAVVSSPAEIVAASGVSLARDLDSLEEAIASGDKKRAQVILSHIPSAIDKHIELANALLETITDPGQRHQIKQSIERLQTLKPRIIENANRAIANPNDHEARKNLSSDIKEAKKAIGQISQPYEVVSALNTKIHNDLDSLIKCIDEGGPDMQVKGVQYAKDIANSIKKQIEAAEAYAQTITDPDRKKQVLDSIEQLKKLTPQLLEAIRACLANPDDKEARKRLDDVVRRVKEASSNLSQVIQPTADELKEEKRKRNEEIARIEAEEKAKARALLKAAELARIEAEEEKKRLAIIEEEKKRLAAEEEERKRAPKLVVPEGPVNKAVFGAAADVAQALESKVRDGTPLGILVQLSDEIAQQMALIASFAMNGDVKGMITAARKIADTIKQVQTQAKHIADNCTDPRLKQNVLTYCDCGGNFSTQLKILCAVKSNDFNDPTAEEQLVTCAKGLSGAVINLVKSSEAASIKQRKVPQQ</sequence>
<protein>
    <recommendedName>
        <fullName>Probable vinculin</fullName>
    </recommendedName>
    <alternativeName>
        <fullName>Ddalpha-catenin</fullName>
    </alternativeName>
</protein>
<keyword id="KW-0009">Actin-binding</keyword>
<keyword id="KW-0130">Cell adhesion</keyword>
<keyword id="KW-0965">Cell junction</keyword>
<keyword id="KW-0175">Coiled coil</keyword>
<keyword id="KW-0963">Cytoplasm</keyword>
<keyword id="KW-1185">Reference proteome</keyword>
<gene>
    <name type="primary">ctnnA</name>
    <name type="synonym">vcl</name>
    <name type="synonym">vinA</name>
    <name type="ORF">DDB_G0285939</name>
</gene>
<accession>Q54MH2</accession>
<reference key="1">
    <citation type="journal article" date="2005" name="Nature">
        <title>The genome of the social amoeba Dictyostelium discoideum.</title>
        <authorList>
            <person name="Eichinger L."/>
            <person name="Pachebat J.A."/>
            <person name="Gloeckner G."/>
            <person name="Rajandream M.A."/>
            <person name="Sucgang R."/>
            <person name="Berriman M."/>
            <person name="Song J."/>
            <person name="Olsen R."/>
            <person name="Szafranski K."/>
            <person name="Xu Q."/>
            <person name="Tunggal B."/>
            <person name="Kummerfeld S."/>
            <person name="Madera M."/>
            <person name="Konfortov B.A."/>
            <person name="Rivero F."/>
            <person name="Bankier A.T."/>
            <person name="Lehmann R."/>
            <person name="Hamlin N."/>
            <person name="Davies R."/>
            <person name="Gaudet P."/>
            <person name="Fey P."/>
            <person name="Pilcher K."/>
            <person name="Chen G."/>
            <person name="Saunders D."/>
            <person name="Sodergren E.J."/>
            <person name="Davis P."/>
            <person name="Kerhornou A."/>
            <person name="Nie X."/>
            <person name="Hall N."/>
            <person name="Anjard C."/>
            <person name="Hemphill L."/>
            <person name="Bason N."/>
            <person name="Farbrother P."/>
            <person name="Desany B."/>
            <person name="Just E."/>
            <person name="Morio T."/>
            <person name="Rost R."/>
            <person name="Churcher C.M."/>
            <person name="Cooper J."/>
            <person name="Haydock S."/>
            <person name="van Driessche N."/>
            <person name="Cronin A."/>
            <person name="Goodhead I."/>
            <person name="Muzny D.M."/>
            <person name="Mourier T."/>
            <person name="Pain A."/>
            <person name="Lu M."/>
            <person name="Harper D."/>
            <person name="Lindsay R."/>
            <person name="Hauser H."/>
            <person name="James K.D."/>
            <person name="Quiles M."/>
            <person name="Madan Babu M."/>
            <person name="Saito T."/>
            <person name="Buchrieser C."/>
            <person name="Wardroper A."/>
            <person name="Felder M."/>
            <person name="Thangavelu M."/>
            <person name="Johnson D."/>
            <person name="Knights A."/>
            <person name="Loulseged H."/>
            <person name="Mungall K.L."/>
            <person name="Oliver K."/>
            <person name="Price C."/>
            <person name="Quail M.A."/>
            <person name="Urushihara H."/>
            <person name="Hernandez J."/>
            <person name="Rabbinowitsch E."/>
            <person name="Steffen D."/>
            <person name="Sanders M."/>
            <person name="Ma J."/>
            <person name="Kohara Y."/>
            <person name="Sharp S."/>
            <person name="Simmonds M.N."/>
            <person name="Spiegler S."/>
            <person name="Tivey A."/>
            <person name="Sugano S."/>
            <person name="White B."/>
            <person name="Walker D."/>
            <person name="Woodward J.R."/>
            <person name="Winckler T."/>
            <person name="Tanaka Y."/>
            <person name="Shaulsky G."/>
            <person name="Schleicher M."/>
            <person name="Weinstock G.M."/>
            <person name="Rosenthal A."/>
            <person name="Cox E.C."/>
            <person name="Chisholm R.L."/>
            <person name="Gibbs R.A."/>
            <person name="Loomis W.F."/>
            <person name="Platzer M."/>
            <person name="Kay R.R."/>
            <person name="Williams J.G."/>
            <person name="Dear P.H."/>
            <person name="Noegel A.A."/>
            <person name="Barrell B.G."/>
            <person name="Kuspa A."/>
        </authorList>
    </citation>
    <scope>NUCLEOTIDE SEQUENCE [LARGE SCALE GENOMIC DNA]</scope>
    <source>
        <strain>AX4</strain>
    </source>
</reference>
<reference key="2">
    <citation type="journal article" date="2009" name="Cell Res.">
        <title>Cell adhesion molecules regulate contractile ring-independent cytokinesis in Dictyostelium discoideum.</title>
        <authorList>
            <person name="Nagasaki A."/>
            <person name="Kanada M."/>
            <person name="Uyeda T.Q."/>
        </authorList>
    </citation>
    <scope>FUNCTION</scope>
    <scope>SUBCELLULAR LOCATION</scope>
    <scope>DEVELOPMENTAL STAGE</scope>
    <scope>DISRUPTION PHENOTYPE</scope>
</reference>
<reference key="3">
    <citation type="journal article" date="2011" name="Science">
        <title>A polarized epithelium organized by beta- and alpha-catenin predates cadherin and metazoan origins.</title>
        <authorList>
            <person name="Dickinson D.J."/>
            <person name="Nelson W.J."/>
            <person name="Weis W.I."/>
        </authorList>
    </citation>
    <scope>FUNCTION</scope>
    <scope>SUBUNIT</scope>
    <scope>INTERACTION WITH AARA</scope>
    <scope>SUBCELLULAR LOCATION</scope>
    <scope>TISSUE SPECIFICITY</scope>
    <scope>DISRUPTION PHENOTYPE</scope>
</reference>
<reference key="4">
    <citation type="journal article" date="2012" name="Dev. Cell">
        <title>Alpha-catenin and IQGAP regulate myosin localization to control epithelial tube morphogenesis in Dictyostelium.</title>
        <authorList>
            <person name="Dickinson D.J."/>
            <person name="Robinson D.N."/>
            <person name="Nelson W.J."/>
            <person name="Weis W.I."/>
        </authorList>
    </citation>
    <scope>FUNCTION</scope>
    <scope>INTERACTION WITH CTXA; CTXB AND RGAA</scope>
</reference>
<name>VINC_DICDI</name>
<dbReference type="EMBL" id="AAFI02000082">
    <property type="protein sequence ID" value="EAL64504.1"/>
    <property type="molecule type" value="Genomic_DNA"/>
</dbReference>
<dbReference type="RefSeq" id="XP_638018.1">
    <property type="nucleotide sequence ID" value="XM_632926.1"/>
</dbReference>
<dbReference type="SMR" id="Q54MH2"/>
<dbReference type="FunCoup" id="Q54MH2">
    <property type="interactions" value="8"/>
</dbReference>
<dbReference type="STRING" id="44689.Q54MH2"/>
<dbReference type="PaxDb" id="44689-DDB0232320"/>
<dbReference type="EnsemblProtists" id="EAL64504">
    <property type="protein sequence ID" value="EAL64504"/>
    <property type="gene ID" value="DDB_G0285939"/>
</dbReference>
<dbReference type="GeneID" id="8625369"/>
<dbReference type="KEGG" id="ddi:DDB_G0285939"/>
<dbReference type="dictyBase" id="DDB_G0285939">
    <property type="gene designation" value="ctnnA"/>
</dbReference>
<dbReference type="VEuPathDB" id="AmoebaDB:DDB_G0285939"/>
<dbReference type="eggNOG" id="KOG3681">
    <property type="taxonomic scope" value="Eukaryota"/>
</dbReference>
<dbReference type="HOGENOM" id="CLU_338163_0_0_1"/>
<dbReference type="InParanoid" id="Q54MH2"/>
<dbReference type="OMA" id="ANNLCEL"/>
<dbReference type="PhylomeDB" id="Q54MH2"/>
<dbReference type="PRO" id="PR:Q54MH2"/>
<dbReference type="Proteomes" id="UP000002195">
    <property type="component" value="Chromosome 4"/>
</dbReference>
<dbReference type="GO" id="GO:0005912">
    <property type="term" value="C:adherens junction"/>
    <property type="evidence" value="ECO:0000318"/>
    <property type="project" value="GO_Central"/>
</dbReference>
<dbReference type="GO" id="GO:0045180">
    <property type="term" value="C:basal cortex"/>
    <property type="evidence" value="ECO:0000314"/>
    <property type="project" value="dictyBase"/>
</dbReference>
<dbReference type="GO" id="GO:0005938">
    <property type="term" value="C:cell cortex"/>
    <property type="evidence" value="ECO:0000314"/>
    <property type="project" value="dictyBase"/>
</dbReference>
<dbReference type="GO" id="GO:0044291">
    <property type="term" value="C:cell-cell contact zone"/>
    <property type="evidence" value="ECO:0000318"/>
    <property type="project" value="GO_Central"/>
</dbReference>
<dbReference type="GO" id="GO:0005911">
    <property type="term" value="C:cell-cell junction"/>
    <property type="evidence" value="ECO:0000314"/>
    <property type="project" value="dictyBase"/>
</dbReference>
<dbReference type="GO" id="GO:0005737">
    <property type="term" value="C:cytoplasm"/>
    <property type="evidence" value="ECO:0000318"/>
    <property type="project" value="GO_Central"/>
</dbReference>
<dbReference type="GO" id="GO:0005856">
    <property type="term" value="C:cytoskeleton"/>
    <property type="evidence" value="ECO:0000318"/>
    <property type="project" value="GO_Central"/>
</dbReference>
<dbReference type="GO" id="GO:0005925">
    <property type="term" value="C:focal adhesion"/>
    <property type="evidence" value="ECO:0000318"/>
    <property type="project" value="GO_Central"/>
</dbReference>
<dbReference type="GO" id="GO:0005886">
    <property type="term" value="C:plasma membrane"/>
    <property type="evidence" value="ECO:0000318"/>
    <property type="project" value="GO_Central"/>
</dbReference>
<dbReference type="GO" id="GO:0051015">
    <property type="term" value="F:actin filament binding"/>
    <property type="evidence" value="ECO:0000314"/>
    <property type="project" value="dictyBase"/>
</dbReference>
<dbReference type="GO" id="GO:0045294">
    <property type="term" value="F:alpha-catenin binding"/>
    <property type="evidence" value="ECO:0000318"/>
    <property type="project" value="GO_Central"/>
</dbReference>
<dbReference type="GO" id="GO:0008013">
    <property type="term" value="F:beta-catenin binding"/>
    <property type="evidence" value="ECO:0000353"/>
    <property type="project" value="dictyBase"/>
</dbReference>
<dbReference type="GO" id="GO:0051017">
    <property type="term" value="P:actin filament bundle assembly"/>
    <property type="evidence" value="ECO:0000314"/>
    <property type="project" value="dictyBase"/>
</dbReference>
<dbReference type="GO" id="GO:0031032">
    <property type="term" value="P:actomyosin structure organization"/>
    <property type="evidence" value="ECO:0000315"/>
    <property type="project" value="dictyBase"/>
</dbReference>
<dbReference type="GO" id="GO:0007155">
    <property type="term" value="P:cell adhesion"/>
    <property type="evidence" value="ECO:0000318"/>
    <property type="project" value="GO_Central"/>
</dbReference>
<dbReference type="GO" id="GO:0051642">
    <property type="term" value="P:centrosome localization"/>
    <property type="evidence" value="ECO:0000315"/>
    <property type="project" value="dictyBase"/>
</dbReference>
<dbReference type="GO" id="GO:0031154">
    <property type="term" value="P:culmination involved in sorocarp development"/>
    <property type="evidence" value="ECO:0000315"/>
    <property type="project" value="dictyBase"/>
</dbReference>
<dbReference type="GO" id="GO:0140509">
    <property type="term" value="P:epithelium-like organization"/>
    <property type="evidence" value="ECO:0000315"/>
    <property type="project" value="dictyBase"/>
</dbReference>
<dbReference type="GO" id="GO:0061245">
    <property type="term" value="P:establishment or maintenance of bipolar cell polarity"/>
    <property type="evidence" value="ECO:0000315"/>
    <property type="project" value="dictyBase"/>
</dbReference>
<dbReference type="GO" id="GO:0051645">
    <property type="term" value="P:Golgi localization"/>
    <property type="evidence" value="ECO:0000315"/>
    <property type="project" value="dictyBase"/>
</dbReference>
<dbReference type="GO" id="GO:0000281">
    <property type="term" value="P:mitotic cytokinesis"/>
    <property type="evidence" value="ECO:0000316"/>
    <property type="project" value="dictyBase"/>
</dbReference>
<dbReference type="GO" id="GO:0051495">
    <property type="term" value="P:positive regulation of cytoskeleton organization"/>
    <property type="evidence" value="ECO:0000315"/>
    <property type="project" value="dictyBase"/>
</dbReference>
<dbReference type="GO" id="GO:0008104">
    <property type="term" value="P:protein localization"/>
    <property type="evidence" value="ECO:0000315"/>
    <property type="project" value="dictyBase"/>
</dbReference>
<dbReference type="GO" id="GO:0009306">
    <property type="term" value="P:protein secretion"/>
    <property type="evidence" value="ECO:0000315"/>
    <property type="project" value="dictyBase"/>
</dbReference>
<dbReference type="GO" id="GO:0031150">
    <property type="term" value="P:sorocarp stalk development"/>
    <property type="evidence" value="ECO:0000315"/>
    <property type="project" value="dictyBase"/>
</dbReference>
<dbReference type="GO" id="GO:0036360">
    <property type="term" value="P:sorocarp stalk morphogenesis"/>
    <property type="evidence" value="ECO:0000315"/>
    <property type="project" value="dictyBase"/>
</dbReference>
<dbReference type="Gene3D" id="1.20.120.230">
    <property type="entry name" value="Alpha-catenin/vinculin-like"/>
    <property type="match status" value="4"/>
</dbReference>
<dbReference type="Gene3D" id="1.20.120.810">
    <property type="entry name" value="Vinculin, Vh2 four-helix bundle"/>
    <property type="match status" value="1"/>
</dbReference>
<dbReference type="InterPro" id="IPR036723">
    <property type="entry name" value="Alpha-catenin/vinculin-like_sf"/>
</dbReference>
<dbReference type="InterPro" id="IPR054082">
    <property type="entry name" value="Talin_IBS2B"/>
</dbReference>
<dbReference type="InterPro" id="IPR017997">
    <property type="entry name" value="Vinculin"/>
</dbReference>
<dbReference type="InterPro" id="IPR006077">
    <property type="entry name" value="Vinculin/catenin"/>
</dbReference>
<dbReference type="PANTHER" id="PTHR46180">
    <property type="entry name" value="VINCULIN"/>
    <property type="match status" value="1"/>
</dbReference>
<dbReference type="Pfam" id="PF21896">
    <property type="entry name" value="Talin_IBS2B"/>
    <property type="match status" value="1"/>
</dbReference>
<dbReference type="Pfam" id="PF01044">
    <property type="entry name" value="Vinculin"/>
    <property type="match status" value="2"/>
</dbReference>
<dbReference type="SUPFAM" id="SSF47220">
    <property type="entry name" value="alpha-catenin/vinculin-like"/>
    <property type="match status" value="4"/>
</dbReference>
<organism>
    <name type="scientific">Dictyostelium discoideum</name>
    <name type="common">Social amoeba</name>
    <dbReference type="NCBI Taxonomy" id="44689"/>
    <lineage>
        <taxon>Eukaryota</taxon>
        <taxon>Amoebozoa</taxon>
        <taxon>Evosea</taxon>
        <taxon>Eumycetozoa</taxon>
        <taxon>Dictyostelia</taxon>
        <taxon>Dictyosteliales</taxon>
        <taxon>Dictyosteliaceae</taxon>
        <taxon>Dictyostelium</taxon>
    </lineage>
</organism>
<feature type="chain" id="PRO_0000333271" description="Probable vinculin">
    <location>
        <begin position="1"/>
        <end position="842"/>
    </location>
</feature>
<feature type="coiled-coil region" evidence="1">
    <location>
        <begin position="585"/>
        <end position="679"/>
    </location>
</feature>